<sequence length="326" mass="34580">MRFTPLFLLAAVAIASPAPDLNARHELTRRQASESCPIGYCTQNGGTTGGAAGDTVTVTNLADLTEAAESDGPLTIIVSGSISGSAKIRVASDKTIFGESGSSITGIGFYIRRVSNVIMRNLKISKVDADNGDAIGIDASSNVWVDHCDLSGDLSGGKDDLDGLVDISHGAEWITVSNTYFHDHWKGSLIGHSDNNEDEDLGHLHVTYANNYWYNVYSRTPLIRFATVHIINNYWDSLIDTGVNCRMDAQVLIQSSAFHNCPDRAIFFADSDYTGYAVVDDVDLGGSSNSVPEGTLTPSSLPYAAITALGSGQVASVIPGTAGQKL</sequence>
<proteinExistence type="evidence at protein level"/>
<protein>
    <recommendedName>
        <fullName>Pectate lyase plyB</fullName>
        <ecNumber>4.2.2.2</ecNumber>
    </recommendedName>
</protein>
<evidence type="ECO:0000250" key="1"/>
<evidence type="ECO:0000255" key="2"/>
<evidence type="ECO:0000269" key="3">
    <source>
    </source>
</evidence>
<evidence type="ECO:0000305" key="4"/>
<gene>
    <name type="primary">plyB</name>
    <name type="synonym">pelA</name>
    <name type="ORF">AN0741</name>
</gene>
<comment type="function">
    <text evidence="3">Pectinolytic enzyme consist of four classes of enzymes: pectin lyase, polygalacturonase, pectin methylesterase and rhamnogalacturonase. Among pectinolytic enzymes, pectin lyase is the most important in depolymerization of pectin, since it cleaves internal glycosidic bonds of highly methylated pectins.</text>
</comment>
<comment type="catalytic activity">
    <reaction>
        <text>Eliminative cleavage of (1-&gt;4)-alpha-D-galacturonan to give oligosaccharides with 4-deoxy-alpha-D-galact-4-enuronosyl groups at their non-reducing ends.</text>
        <dbReference type="EC" id="4.2.2.2"/>
    </reaction>
</comment>
<comment type="cofactor">
    <cofactor evidence="1">
        <name>Ca(2+)</name>
        <dbReference type="ChEBI" id="CHEBI:29108"/>
    </cofactor>
    <text evidence="1">Binds 1 Ca(2+) ion per subunit.</text>
</comment>
<comment type="biophysicochemical properties">
    <phDependence>
        <text evidence="3">Optimum pH is 8.5.</text>
    </phDependence>
    <temperatureDependence>
        <text evidence="3">Optimum temperature is 37 degrees Celsius.</text>
    </temperatureDependence>
</comment>
<comment type="pathway">
    <text>Glycan metabolism; pectin degradation; 2-dehydro-3-deoxy-D-gluconate from pectin: step 2/5.</text>
</comment>
<comment type="subcellular location">
    <subcellularLocation>
        <location evidence="4">Secreted</location>
    </subcellularLocation>
</comment>
<comment type="similarity">
    <text evidence="4">Belongs to the polysaccharide lyase 1 family.</text>
</comment>
<accession>Q00645</accession>
<accession>C8VR95</accession>
<accession>Q1HFV6</accession>
<accession>Q5BFD9</accession>
<name>PLYB_EMENI</name>
<feature type="signal peptide" evidence="2">
    <location>
        <begin position="1"/>
        <end position="15"/>
    </location>
</feature>
<feature type="chain" id="PRO_0000024894" description="Pectate lyase plyB">
    <location>
        <begin position="16"/>
        <end position="326"/>
    </location>
</feature>
<feature type="active site" evidence="2">
    <location>
        <position position="219"/>
    </location>
</feature>
<feature type="binding site" evidence="1">
    <location>
        <position position="133"/>
    </location>
    <ligand>
        <name>Ca(2+)</name>
        <dbReference type="ChEBI" id="CHEBI:29108"/>
    </ligand>
</feature>
<feature type="binding site" evidence="1">
    <location>
        <position position="162"/>
    </location>
    <ligand>
        <name>Ca(2+)</name>
        <dbReference type="ChEBI" id="CHEBI:29108"/>
    </ligand>
</feature>
<feature type="binding site" evidence="1">
    <location>
        <position position="166"/>
    </location>
    <ligand>
        <name>Ca(2+)</name>
        <dbReference type="ChEBI" id="CHEBI:29108"/>
    </ligand>
</feature>
<reference key="1">
    <citation type="journal article" date="1995" name="Curr. Genet.">
        <title>Sequence analysis of the Aspergillus nidulans pectate lyase pelA gene and evidence for binding of promoter regions to CREA, a regulator of carbon catabolite repression.</title>
        <authorList>
            <person name="Ho M.C."/>
            <person name="Whitehead M.P."/>
            <person name="Cleveland T.E."/>
            <person name="Dean R.A."/>
        </authorList>
    </citation>
    <scope>NUCLEOTIDE SEQUENCE [GENOMIC DNA]</scope>
    <source>
        <strain>FGSC A4 / ATCC 38163 / CBS 112.46 / NRRL 194 / M139</strain>
    </source>
</reference>
<reference key="2">
    <citation type="journal article" date="2006" name="Proc. Natl. Acad. Sci. U.S.A.">
        <title>Development and application of a suite of polysaccharide-degrading enzymes for analyzing plant cell walls.</title>
        <authorList>
            <person name="Bauer S."/>
            <person name="Vasu P."/>
            <person name="Persson S."/>
            <person name="Mort A.J."/>
            <person name="Somerville C.R."/>
        </authorList>
    </citation>
    <scope>NUCLEOTIDE SEQUENCE [MRNA]</scope>
    <scope>FUNCTION</scope>
    <scope>BIOPHYSICOCHEMICAL PROPERTIES</scope>
    <source>
        <strain>FGSC A4 / ATCC 38163 / CBS 112.46 / NRRL 194 / M139</strain>
    </source>
</reference>
<reference key="3">
    <citation type="journal article" date="2005" name="Nature">
        <title>Sequencing of Aspergillus nidulans and comparative analysis with A. fumigatus and A. oryzae.</title>
        <authorList>
            <person name="Galagan J.E."/>
            <person name="Calvo S.E."/>
            <person name="Cuomo C."/>
            <person name="Ma L.-J."/>
            <person name="Wortman J.R."/>
            <person name="Batzoglou S."/>
            <person name="Lee S.-I."/>
            <person name="Bastuerkmen M."/>
            <person name="Spevak C.C."/>
            <person name="Clutterbuck J."/>
            <person name="Kapitonov V."/>
            <person name="Jurka J."/>
            <person name="Scazzocchio C."/>
            <person name="Farman M.L."/>
            <person name="Butler J."/>
            <person name="Purcell S."/>
            <person name="Harris S."/>
            <person name="Braus G.H."/>
            <person name="Draht O."/>
            <person name="Busch S."/>
            <person name="D'Enfert C."/>
            <person name="Bouchier C."/>
            <person name="Goldman G.H."/>
            <person name="Bell-Pedersen D."/>
            <person name="Griffiths-Jones S."/>
            <person name="Doonan J.H."/>
            <person name="Yu J."/>
            <person name="Vienken K."/>
            <person name="Pain A."/>
            <person name="Freitag M."/>
            <person name="Selker E.U."/>
            <person name="Archer D.B."/>
            <person name="Penalva M.A."/>
            <person name="Oakley B.R."/>
            <person name="Momany M."/>
            <person name="Tanaka T."/>
            <person name="Kumagai T."/>
            <person name="Asai K."/>
            <person name="Machida M."/>
            <person name="Nierman W.C."/>
            <person name="Denning D.W."/>
            <person name="Caddick M.X."/>
            <person name="Hynes M."/>
            <person name="Paoletti M."/>
            <person name="Fischer R."/>
            <person name="Miller B.L."/>
            <person name="Dyer P.S."/>
            <person name="Sachs M.S."/>
            <person name="Osmani S.A."/>
            <person name="Birren B.W."/>
        </authorList>
    </citation>
    <scope>NUCLEOTIDE SEQUENCE [LARGE SCALE GENOMIC DNA]</scope>
    <source>
        <strain>FGSC A4 / ATCC 38163 / CBS 112.46 / NRRL 194 / M139</strain>
    </source>
</reference>
<reference key="4">
    <citation type="journal article" date="2009" name="Fungal Genet. Biol.">
        <title>The 2008 update of the Aspergillus nidulans genome annotation: a community effort.</title>
        <authorList>
            <person name="Wortman J.R."/>
            <person name="Gilsenan J.M."/>
            <person name="Joardar V."/>
            <person name="Deegan J."/>
            <person name="Clutterbuck J."/>
            <person name="Andersen M.R."/>
            <person name="Archer D."/>
            <person name="Bencina M."/>
            <person name="Braus G."/>
            <person name="Coutinho P."/>
            <person name="von Dohren H."/>
            <person name="Doonan J."/>
            <person name="Driessen A.J."/>
            <person name="Durek P."/>
            <person name="Espeso E."/>
            <person name="Fekete E."/>
            <person name="Flipphi M."/>
            <person name="Estrada C.G."/>
            <person name="Geysens S."/>
            <person name="Goldman G."/>
            <person name="de Groot P.W."/>
            <person name="Hansen K."/>
            <person name="Harris S.D."/>
            <person name="Heinekamp T."/>
            <person name="Helmstaedt K."/>
            <person name="Henrissat B."/>
            <person name="Hofmann G."/>
            <person name="Homan T."/>
            <person name="Horio T."/>
            <person name="Horiuchi H."/>
            <person name="James S."/>
            <person name="Jones M."/>
            <person name="Karaffa L."/>
            <person name="Karanyi Z."/>
            <person name="Kato M."/>
            <person name="Keller N."/>
            <person name="Kelly D.E."/>
            <person name="Kiel J.A."/>
            <person name="Kim J.M."/>
            <person name="van der Klei I.J."/>
            <person name="Klis F.M."/>
            <person name="Kovalchuk A."/>
            <person name="Krasevec N."/>
            <person name="Kubicek C.P."/>
            <person name="Liu B."/>
            <person name="Maccabe A."/>
            <person name="Meyer V."/>
            <person name="Mirabito P."/>
            <person name="Miskei M."/>
            <person name="Mos M."/>
            <person name="Mullins J."/>
            <person name="Nelson D.R."/>
            <person name="Nielsen J."/>
            <person name="Oakley B.R."/>
            <person name="Osmani S.A."/>
            <person name="Pakula T."/>
            <person name="Paszewski A."/>
            <person name="Paulsen I."/>
            <person name="Pilsyk S."/>
            <person name="Pocsi I."/>
            <person name="Punt P.J."/>
            <person name="Ram A.F."/>
            <person name="Ren Q."/>
            <person name="Robellet X."/>
            <person name="Robson G."/>
            <person name="Seiboth B."/>
            <person name="van Solingen P."/>
            <person name="Specht T."/>
            <person name="Sun J."/>
            <person name="Taheri-Talesh N."/>
            <person name="Takeshita N."/>
            <person name="Ussery D."/>
            <person name="vanKuyk P.A."/>
            <person name="Visser H."/>
            <person name="van de Vondervoort P.J."/>
            <person name="de Vries R.P."/>
            <person name="Walton J."/>
            <person name="Xiang X."/>
            <person name="Xiong Y."/>
            <person name="Zeng A.P."/>
            <person name="Brandt B.W."/>
            <person name="Cornell M.J."/>
            <person name="van den Hondel C.A."/>
            <person name="Visser J."/>
            <person name="Oliver S.G."/>
            <person name="Turner G."/>
        </authorList>
    </citation>
    <scope>GENOME REANNOTATION</scope>
    <source>
        <strain>FGSC A4 / ATCC 38163 / CBS 112.46 / NRRL 194 / M139</strain>
    </source>
</reference>
<dbReference type="EC" id="4.2.2.2"/>
<dbReference type="EMBL" id="U05592">
    <property type="protein sequence ID" value="AAA80568.1"/>
    <property type="molecule type" value="Genomic_DNA"/>
</dbReference>
<dbReference type="EMBL" id="DQ490468">
    <property type="protein sequence ID" value="ABF50844.1"/>
    <property type="molecule type" value="mRNA"/>
</dbReference>
<dbReference type="EMBL" id="AACD01000012">
    <property type="protein sequence ID" value="EAA65383.1"/>
    <property type="molecule type" value="Genomic_DNA"/>
</dbReference>
<dbReference type="EMBL" id="BN001308">
    <property type="protein sequence ID" value="CBF88875.1"/>
    <property type="molecule type" value="Genomic_DNA"/>
</dbReference>
<dbReference type="RefSeq" id="XP_658345.1">
    <property type="nucleotide sequence ID" value="XM_653253.1"/>
</dbReference>
<dbReference type="SMR" id="Q00645"/>
<dbReference type="STRING" id="227321.Q00645"/>
<dbReference type="CAZy" id="PL1">
    <property type="family name" value="Polysaccharide Lyase Family 1"/>
</dbReference>
<dbReference type="EnsemblFungi" id="CBF88875">
    <property type="protein sequence ID" value="CBF88875"/>
    <property type="gene ID" value="ANIA_00741"/>
</dbReference>
<dbReference type="KEGG" id="ani:ANIA_00741"/>
<dbReference type="VEuPathDB" id="FungiDB:AN0741"/>
<dbReference type="eggNOG" id="ENOG502S66G">
    <property type="taxonomic scope" value="Eukaryota"/>
</dbReference>
<dbReference type="HOGENOM" id="CLU_021894_2_1_1"/>
<dbReference type="InParanoid" id="Q00645"/>
<dbReference type="OMA" id="LVNNYWD"/>
<dbReference type="OrthoDB" id="1637350at2759"/>
<dbReference type="UniPathway" id="UPA00545">
    <property type="reaction ID" value="UER00824"/>
</dbReference>
<dbReference type="Proteomes" id="UP000000560">
    <property type="component" value="Chromosome VIII"/>
</dbReference>
<dbReference type="GO" id="GO:0005576">
    <property type="term" value="C:extracellular region"/>
    <property type="evidence" value="ECO:0007669"/>
    <property type="project" value="UniProtKB-SubCell"/>
</dbReference>
<dbReference type="GO" id="GO:0046872">
    <property type="term" value="F:metal ion binding"/>
    <property type="evidence" value="ECO:0007669"/>
    <property type="project" value="UniProtKB-KW"/>
</dbReference>
<dbReference type="GO" id="GO:0030570">
    <property type="term" value="F:pectate lyase activity"/>
    <property type="evidence" value="ECO:0000314"/>
    <property type="project" value="UniProtKB"/>
</dbReference>
<dbReference type="GO" id="GO:0071555">
    <property type="term" value="P:cell wall organization"/>
    <property type="evidence" value="ECO:0007669"/>
    <property type="project" value="UniProtKB-KW"/>
</dbReference>
<dbReference type="GO" id="GO:0045490">
    <property type="term" value="P:pectin catabolic process"/>
    <property type="evidence" value="ECO:0000314"/>
    <property type="project" value="UniProtKB"/>
</dbReference>
<dbReference type="FunFam" id="2.160.20.10:FF:000036">
    <property type="entry name" value="Pectate lyase A"/>
    <property type="match status" value="1"/>
</dbReference>
<dbReference type="Gene3D" id="2.160.20.10">
    <property type="entry name" value="Single-stranded right-handed beta-helix, Pectin lyase-like"/>
    <property type="match status" value="1"/>
</dbReference>
<dbReference type="InterPro" id="IPR002022">
    <property type="entry name" value="Pec_lyase"/>
</dbReference>
<dbReference type="InterPro" id="IPR012334">
    <property type="entry name" value="Pectin_lyas_fold"/>
</dbReference>
<dbReference type="InterPro" id="IPR011050">
    <property type="entry name" value="Pectin_lyase_fold/virulence"/>
</dbReference>
<dbReference type="InterPro" id="IPR045032">
    <property type="entry name" value="PEL"/>
</dbReference>
<dbReference type="PANTHER" id="PTHR31683">
    <property type="entry name" value="PECTATE LYASE 18-RELATED"/>
    <property type="match status" value="1"/>
</dbReference>
<dbReference type="PANTHER" id="PTHR31683:SF18">
    <property type="entry name" value="PECTATE LYASE 21-RELATED"/>
    <property type="match status" value="1"/>
</dbReference>
<dbReference type="Pfam" id="PF00544">
    <property type="entry name" value="Pectate_lyase_4"/>
    <property type="match status" value="1"/>
</dbReference>
<dbReference type="SMART" id="SM00656">
    <property type="entry name" value="Amb_all"/>
    <property type="match status" value="1"/>
</dbReference>
<dbReference type="SUPFAM" id="SSF51126">
    <property type="entry name" value="Pectin lyase-like"/>
    <property type="match status" value="1"/>
</dbReference>
<keyword id="KW-0106">Calcium</keyword>
<keyword id="KW-0119">Carbohydrate metabolism</keyword>
<keyword id="KW-0961">Cell wall biogenesis/degradation</keyword>
<keyword id="KW-0456">Lyase</keyword>
<keyword id="KW-0479">Metal-binding</keyword>
<keyword id="KW-0624">Polysaccharide degradation</keyword>
<keyword id="KW-1185">Reference proteome</keyword>
<keyword id="KW-0964">Secreted</keyword>
<keyword id="KW-0732">Signal</keyword>
<organism>
    <name type="scientific">Emericella nidulans (strain FGSC A4 / ATCC 38163 / CBS 112.46 / NRRL 194 / M139)</name>
    <name type="common">Aspergillus nidulans</name>
    <dbReference type="NCBI Taxonomy" id="227321"/>
    <lineage>
        <taxon>Eukaryota</taxon>
        <taxon>Fungi</taxon>
        <taxon>Dikarya</taxon>
        <taxon>Ascomycota</taxon>
        <taxon>Pezizomycotina</taxon>
        <taxon>Eurotiomycetes</taxon>
        <taxon>Eurotiomycetidae</taxon>
        <taxon>Eurotiales</taxon>
        <taxon>Aspergillaceae</taxon>
        <taxon>Aspergillus</taxon>
        <taxon>Aspergillus subgen. Nidulantes</taxon>
    </lineage>
</organism>